<sequence>MRAVIQKTVGAKVDVVSEAGTETCGKIDGGFVVLLGVTHSDTEKDARYIADKIAHLRVFEDEAGKLNLSLKDVGGAVLLVSQFTLYADAASGRRPSFSQAAPAEQAQRLYLRTAELLRGHGIHVETGRFRTHMQVSLCNDGPVTILLDSFMTRISPKMKVVPD</sequence>
<dbReference type="EC" id="3.1.1.96" evidence="1"/>
<dbReference type="EMBL" id="CP001050">
    <property type="protein sequence ID" value="ACF30648.1"/>
    <property type="molecule type" value="Genomic_DNA"/>
</dbReference>
<dbReference type="RefSeq" id="WP_003689787.1">
    <property type="nucleotide sequence ID" value="NC_011035.1"/>
</dbReference>
<dbReference type="SMR" id="B4RNL5"/>
<dbReference type="GeneID" id="66753934"/>
<dbReference type="KEGG" id="ngk:NGK_2039"/>
<dbReference type="HOGENOM" id="CLU_076901_1_0_4"/>
<dbReference type="Proteomes" id="UP000002564">
    <property type="component" value="Chromosome"/>
</dbReference>
<dbReference type="GO" id="GO:0005737">
    <property type="term" value="C:cytoplasm"/>
    <property type="evidence" value="ECO:0007669"/>
    <property type="project" value="UniProtKB-SubCell"/>
</dbReference>
<dbReference type="GO" id="GO:0051500">
    <property type="term" value="F:D-tyrosyl-tRNA(Tyr) deacylase activity"/>
    <property type="evidence" value="ECO:0007669"/>
    <property type="project" value="TreeGrafter"/>
</dbReference>
<dbReference type="GO" id="GO:0106026">
    <property type="term" value="F:Gly-tRNA(Ala) deacylase activity"/>
    <property type="evidence" value="ECO:0007669"/>
    <property type="project" value="UniProtKB-UniRule"/>
</dbReference>
<dbReference type="GO" id="GO:0043908">
    <property type="term" value="F:Ser(Gly)-tRNA(Ala) hydrolase activity"/>
    <property type="evidence" value="ECO:0007669"/>
    <property type="project" value="UniProtKB-UniRule"/>
</dbReference>
<dbReference type="GO" id="GO:0000049">
    <property type="term" value="F:tRNA binding"/>
    <property type="evidence" value="ECO:0007669"/>
    <property type="project" value="UniProtKB-UniRule"/>
</dbReference>
<dbReference type="GO" id="GO:0019478">
    <property type="term" value="P:D-amino acid catabolic process"/>
    <property type="evidence" value="ECO:0007669"/>
    <property type="project" value="UniProtKB-UniRule"/>
</dbReference>
<dbReference type="CDD" id="cd00563">
    <property type="entry name" value="Dtyr_deacylase"/>
    <property type="match status" value="1"/>
</dbReference>
<dbReference type="FunFam" id="3.50.80.10:FF:000002">
    <property type="entry name" value="D-aminoacyl-tRNA deacylase"/>
    <property type="match status" value="1"/>
</dbReference>
<dbReference type="Gene3D" id="3.50.80.10">
    <property type="entry name" value="D-tyrosyl-tRNA(Tyr) deacylase"/>
    <property type="match status" value="1"/>
</dbReference>
<dbReference type="HAMAP" id="MF_00518">
    <property type="entry name" value="Deacylase_Dtd"/>
    <property type="match status" value="1"/>
</dbReference>
<dbReference type="InterPro" id="IPR003732">
    <property type="entry name" value="Daa-tRNA_deacyls_DTD"/>
</dbReference>
<dbReference type="InterPro" id="IPR023509">
    <property type="entry name" value="DTD-like_sf"/>
</dbReference>
<dbReference type="NCBIfam" id="TIGR00256">
    <property type="entry name" value="D-aminoacyl-tRNA deacylase"/>
    <property type="match status" value="1"/>
</dbReference>
<dbReference type="PANTHER" id="PTHR10472:SF5">
    <property type="entry name" value="D-AMINOACYL-TRNA DEACYLASE 1"/>
    <property type="match status" value="1"/>
</dbReference>
<dbReference type="PANTHER" id="PTHR10472">
    <property type="entry name" value="D-TYROSYL-TRNA TYR DEACYLASE"/>
    <property type="match status" value="1"/>
</dbReference>
<dbReference type="Pfam" id="PF02580">
    <property type="entry name" value="Tyr_Deacylase"/>
    <property type="match status" value="1"/>
</dbReference>
<dbReference type="SUPFAM" id="SSF69500">
    <property type="entry name" value="DTD-like"/>
    <property type="match status" value="1"/>
</dbReference>
<evidence type="ECO:0000255" key="1">
    <source>
        <dbReference type="HAMAP-Rule" id="MF_00518"/>
    </source>
</evidence>
<gene>
    <name evidence="1" type="primary">dtd</name>
    <name type="ordered locus">NGK_2039</name>
</gene>
<reference key="1">
    <citation type="journal article" date="2008" name="J. Bacteriol.">
        <title>Complete genome sequence of Neisseria gonorrhoeae NCCP11945.</title>
        <authorList>
            <person name="Chung G.T."/>
            <person name="Yoo J.S."/>
            <person name="Oh H.B."/>
            <person name="Lee Y.S."/>
            <person name="Cha S.H."/>
            <person name="Kim S.J."/>
            <person name="Yoo C.K."/>
        </authorList>
    </citation>
    <scope>NUCLEOTIDE SEQUENCE [LARGE SCALE GENOMIC DNA]</scope>
    <source>
        <strain>NCCP11945</strain>
    </source>
</reference>
<organism>
    <name type="scientific">Neisseria gonorrhoeae (strain NCCP11945)</name>
    <dbReference type="NCBI Taxonomy" id="521006"/>
    <lineage>
        <taxon>Bacteria</taxon>
        <taxon>Pseudomonadati</taxon>
        <taxon>Pseudomonadota</taxon>
        <taxon>Betaproteobacteria</taxon>
        <taxon>Neisseriales</taxon>
        <taxon>Neisseriaceae</taxon>
        <taxon>Neisseria</taxon>
    </lineage>
</organism>
<name>DTD_NEIG2</name>
<protein>
    <recommendedName>
        <fullName evidence="1">D-aminoacyl-tRNA deacylase</fullName>
        <shortName evidence="1">DTD</shortName>
        <ecNumber evidence="1">3.1.1.96</ecNumber>
    </recommendedName>
    <alternativeName>
        <fullName evidence="1">Gly-tRNA(Ala) deacylase</fullName>
    </alternativeName>
</protein>
<accession>B4RNL5</accession>
<keyword id="KW-0963">Cytoplasm</keyword>
<keyword id="KW-0378">Hydrolase</keyword>
<keyword id="KW-0694">RNA-binding</keyword>
<keyword id="KW-0820">tRNA-binding</keyword>
<comment type="function">
    <text evidence="1">An aminoacyl-tRNA editing enzyme that deacylates mischarged D-aminoacyl-tRNAs. Also deacylates mischarged glycyl-tRNA(Ala), protecting cells against glycine mischarging by AlaRS. Acts via tRNA-based rather than protein-based catalysis; rejects L-amino acids rather than detecting D-amino acids in the active site. By recycling D-aminoacyl-tRNA to D-amino acids and free tRNA molecules, this enzyme counteracts the toxicity associated with the formation of D-aminoacyl-tRNA entities in vivo and helps enforce protein L-homochirality.</text>
</comment>
<comment type="catalytic activity">
    <reaction evidence="1">
        <text>glycyl-tRNA(Ala) + H2O = tRNA(Ala) + glycine + H(+)</text>
        <dbReference type="Rhea" id="RHEA:53744"/>
        <dbReference type="Rhea" id="RHEA-COMP:9657"/>
        <dbReference type="Rhea" id="RHEA-COMP:13640"/>
        <dbReference type="ChEBI" id="CHEBI:15377"/>
        <dbReference type="ChEBI" id="CHEBI:15378"/>
        <dbReference type="ChEBI" id="CHEBI:57305"/>
        <dbReference type="ChEBI" id="CHEBI:78442"/>
        <dbReference type="ChEBI" id="CHEBI:78522"/>
        <dbReference type="EC" id="3.1.1.96"/>
    </reaction>
</comment>
<comment type="catalytic activity">
    <reaction evidence="1">
        <text>a D-aminoacyl-tRNA + H2O = a tRNA + a D-alpha-amino acid + H(+)</text>
        <dbReference type="Rhea" id="RHEA:13953"/>
        <dbReference type="Rhea" id="RHEA-COMP:10123"/>
        <dbReference type="Rhea" id="RHEA-COMP:10124"/>
        <dbReference type="ChEBI" id="CHEBI:15377"/>
        <dbReference type="ChEBI" id="CHEBI:15378"/>
        <dbReference type="ChEBI" id="CHEBI:59871"/>
        <dbReference type="ChEBI" id="CHEBI:78442"/>
        <dbReference type="ChEBI" id="CHEBI:79333"/>
        <dbReference type="EC" id="3.1.1.96"/>
    </reaction>
</comment>
<comment type="subunit">
    <text evidence="1">Homodimer.</text>
</comment>
<comment type="subcellular location">
    <subcellularLocation>
        <location evidence="1">Cytoplasm</location>
    </subcellularLocation>
</comment>
<comment type="domain">
    <text evidence="1">A Gly-cisPro motif from one monomer fits into the active site of the other monomer to allow specific chiral rejection of L-amino acids.</text>
</comment>
<comment type="similarity">
    <text evidence="1">Belongs to the DTD family.</text>
</comment>
<feature type="chain" id="PRO_1000127555" description="D-aminoacyl-tRNA deacylase">
    <location>
        <begin position="1"/>
        <end position="163"/>
    </location>
</feature>
<feature type="short sequence motif" description="Gly-cisPro motif, important for rejection of L-amino acids" evidence="1">
    <location>
        <begin position="141"/>
        <end position="142"/>
    </location>
</feature>
<proteinExistence type="inferred from homology"/>